<evidence type="ECO:0000255" key="1">
    <source>
        <dbReference type="HAMAP-Rule" id="MF_00121"/>
    </source>
</evidence>
<organism>
    <name type="scientific">Mycobacterium sp. (strain MCS)</name>
    <dbReference type="NCBI Taxonomy" id="164756"/>
    <lineage>
        <taxon>Bacteria</taxon>
        <taxon>Bacillati</taxon>
        <taxon>Actinomycetota</taxon>
        <taxon>Actinomycetes</taxon>
        <taxon>Mycobacteriales</taxon>
        <taxon>Mycobacteriaceae</taxon>
        <taxon>Mycobacterium</taxon>
    </lineage>
</organism>
<reference key="1">
    <citation type="submission" date="2006-06" db="EMBL/GenBank/DDBJ databases">
        <title>Complete sequence of chromosome of Mycobacterium sp. MCS.</title>
        <authorList>
            <consortium name="US DOE Joint Genome Institute"/>
            <person name="Copeland A."/>
            <person name="Lucas S."/>
            <person name="Lapidus A."/>
            <person name="Barry K."/>
            <person name="Detter J.C."/>
            <person name="Glavina del Rio T."/>
            <person name="Hammon N."/>
            <person name="Israni S."/>
            <person name="Dalin E."/>
            <person name="Tice H."/>
            <person name="Pitluck S."/>
            <person name="Martinez M."/>
            <person name="Schmutz J."/>
            <person name="Larimer F."/>
            <person name="Land M."/>
            <person name="Hauser L."/>
            <person name="Kyrpides N."/>
            <person name="Kim E."/>
            <person name="Miller C.D."/>
            <person name="Hughes J.E."/>
            <person name="Anderson A.J."/>
            <person name="Sims R.C."/>
            <person name="Richardson P."/>
        </authorList>
    </citation>
    <scope>NUCLEOTIDE SEQUENCE [LARGE SCALE GENOMIC DNA]</scope>
    <source>
        <strain>MCS</strain>
    </source>
</reference>
<feature type="chain" id="PRO_1000016004" description="Aspartyl/glutamyl-tRNA(Asn/Gln) amidotransferase subunit B">
    <location>
        <begin position="1"/>
        <end position="501"/>
    </location>
</feature>
<name>GATB_MYCSS</name>
<keyword id="KW-0067">ATP-binding</keyword>
<keyword id="KW-0436">Ligase</keyword>
<keyword id="KW-0547">Nucleotide-binding</keyword>
<keyword id="KW-0648">Protein biosynthesis</keyword>
<gene>
    <name evidence="1" type="primary">gatB</name>
    <name type="ordered locus">Mmcs_1894</name>
</gene>
<dbReference type="EC" id="6.3.5.-" evidence="1"/>
<dbReference type="EMBL" id="CP000384">
    <property type="protein sequence ID" value="ABG08003.1"/>
    <property type="molecule type" value="Genomic_DNA"/>
</dbReference>
<dbReference type="SMR" id="Q1BAT1"/>
<dbReference type="KEGG" id="mmc:Mmcs_1894"/>
<dbReference type="HOGENOM" id="CLU_019240_0_0_11"/>
<dbReference type="BioCyc" id="MSP164756:G1G6O-1936-MONOMER"/>
<dbReference type="GO" id="GO:0050566">
    <property type="term" value="F:asparaginyl-tRNA synthase (glutamine-hydrolyzing) activity"/>
    <property type="evidence" value="ECO:0007669"/>
    <property type="project" value="RHEA"/>
</dbReference>
<dbReference type="GO" id="GO:0005524">
    <property type="term" value="F:ATP binding"/>
    <property type="evidence" value="ECO:0007669"/>
    <property type="project" value="UniProtKB-KW"/>
</dbReference>
<dbReference type="GO" id="GO:0050567">
    <property type="term" value="F:glutaminyl-tRNA synthase (glutamine-hydrolyzing) activity"/>
    <property type="evidence" value="ECO:0007669"/>
    <property type="project" value="UniProtKB-UniRule"/>
</dbReference>
<dbReference type="GO" id="GO:0070681">
    <property type="term" value="P:glutaminyl-tRNAGln biosynthesis via transamidation"/>
    <property type="evidence" value="ECO:0007669"/>
    <property type="project" value="TreeGrafter"/>
</dbReference>
<dbReference type="GO" id="GO:0006412">
    <property type="term" value="P:translation"/>
    <property type="evidence" value="ECO:0007669"/>
    <property type="project" value="UniProtKB-UniRule"/>
</dbReference>
<dbReference type="FunFam" id="1.10.10.410:FF:000002">
    <property type="entry name" value="Aspartyl/glutamyl-tRNA(Asn/Gln) amidotransferase subunit B"/>
    <property type="match status" value="1"/>
</dbReference>
<dbReference type="Gene3D" id="1.10.10.410">
    <property type="match status" value="1"/>
</dbReference>
<dbReference type="HAMAP" id="MF_00121">
    <property type="entry name" value="GatB"/>
    <property type="match status" value="1"/>
</dbReference>
<dbReference type="InterPro" id="IPR017959">
    <property type="entry name" value="Asn/Gln-tRNA_amidoTrfase_suB/E"/>
</dbReference>
<dbReference type="InterPro" id="IPR006075">
    <property type="entry name" value="Asn/Gln-tRNA_Trfase_suB/E_cat"/>
</dbReference>
<dbReference type="InterPro" id="IPR018027">
    <property type="entry name" value="Asn/Gln_amidotransferase"/>
</dbReference>
<dbReference type="InterPro" id="IPR003789">
    <property type="entry name" value="Asn/Gln_tRNA_amidoTrase-B-like"/>
</dbReference>
<dbReference type="InterPro" id="IPR004413">
    <property type="entry name" value="GatB"/>
</dbReference>
<dbReference type="InterPro" id="IPR023168">
    <property type="entry name" value="GatB_Yqey_C_2"/>
</dbReference>
<dbReference type="InterPro" id="IPR017958">
    <property type="entry name" value="Gln-tRNA_amidoTrfase_suB_CS"/>
</dbReference>
<dbReference type="InterPro" id="IPR014746">
    <property type="entry name" value="Gln_synth/guanido_kin_cat_dom"/>
</dbReference>
<dbReference type="NCBIfam" id="TIGR00133">
    <property type="entry name" value="gatB"/>
    <property type="match status" value="1"/>
</dbReference>
<dbReference type="NCBIfam" id="NF004012">
    <property type="entry name" value="PRK05477.1-2"/>
    <property type="match status" value="1"/>
</dbReference>
<dbReference type="NCBIfam" id="NF004013">
    <property type="entry name" value="PRK05477.1-3"/>
    <property type="match status" value="1"/>
</dbReference>
<dbReference type="NCBIfam" id="NF004014">
    <property type="entry name" value="PRK05477.1-4"/>
    <property type="match status" value="1"/>
</dbReference>
<dbReference type="PANTHER" id="PTHR11659">
    <property type="entry name" value="GLUTAMYL-TRNA GLN AMIDOTRANSFERASE SUBUNIT B MITOCHONDRIAL AND PROKARYOTIC PET112-RELATED"/>
    <property type="match status" value="1"/>
</dbReference>
<dbReference type="PANTHER" id="PTHR11659:SF0">
    <property type="entry name" value="GLUTAMYL-TRNA(GLN) AMIDOTRANSFERASE SUBUNIT B, MITOCHONDRIAL"/>
    <property type="match status" value="1"/>
</dbReference>
<dbReference type="Pfam" id="PF02934">
    <property type="entry name" value="GatB_N"/>
    <property type="match status" value="1"/>
</dbReference>
<dbReference type="Pfam" id="PF02637">
    <property type="entry name" value="GatB_Yqey"/>
    <property type="match status" value="1"/>
</dbReference>
<dbReference type="SMART" id="SM00845">
    <property type="entry name" value="GatB_Yqey"/>
    <property type="match status" value="1"/>
</dbReference>
<dbReference type="SUPFAM" id="SSF89095">
    <property type="entry name" value="GatB/YqeY motif"/>
    <property type="match status" value="1"/>
</dbReference>
<dbReference type="SUPFAM" id="SSF55931">
    <property type="entry name" value="Glutamine synthetase/guanido kinase"/>
    <property type="match status" value="1"/>
</dbReference>
<dbReference type="PROSITE" id="PS01234">
    <property type="entry name" value="GATB"/>
    <property type="match status" value="1"/>
</dbReference>
<comment type="function">
    <text evidence="1">Allows the formation of correctly charged Asn-tRNA(Asn) or Gln-tRNA(Gln) through the transamidation of misacylated Asp-tRNA(Asn) or Glu-tRNA(Gln) in organisms which lack either or both of asparaginyl-tRNA or glutaminyl-tRNA synthetases. The reaction takes place in the presence of glutamine and ATP through an activated phospho-Asp-tRNA(Asn) or phospho-Glu-tRNA(Gln).</text>
</comment>
<comment type="catalytic activity">
    <reaction evidence="1">
        <text>L-glutamyl-tRNA(Gln) + L-glutamine + ATP + H2O = L-glutaminyl-tRNA(Gln) + L-glutamate + ADP + phosphate + H(+)</text>
        <dbReference type="Rhea" id="RHEA:17521"/>
        <dbReference type="Rhea" id="RHEA-COMP:9681"/>
        <dbReference type="Rhea" id="RHEA-COMP:9684"/>
        <dbReference type="ChEBI" id="CHEBI:15377"/>
        <dbReference type="ChEBI" id="CHEBI:15378"/>
        <dbReference type="ChEBI" id="CHEBI:29985"/>
        <dbReference type="ChEBI" id="CHEBI:30616"/>
        <dbReference type="ChEBI" id="CHEBI:43474"/>
        <dbReference type="ChEBI" id="CHEBI:58359"/>
        <dbReference type="ChEBI" id="CHEBI:78520"/>
        <dbReference type="ChEBI" id="CHEBI:78521"/>
        <dbReference type="ChEBI" id="CHEBI:456216"/>
    </reaction>
</comment>
<comment type="catalytic activity">
    <reaction evidence="1">
        <text>L-aspartyl-tRNA(Asn) + L-glutamine + ATP + H2O = L-asparaginyl-tRNA(Asn) + L-glutamate + ADP + phosphate + 2 H(+)</text>
        <dbReference type="Rhea" id="RHEA:14513"/>
        <dbReference type="Rhea" id="RHEA-COMP:9674"/>
        <dbReference type="Rhea" id="RHEA-COMP:9677"/>
        <dbReference type="ChEBI" id="CHEBI:15377"/>
        <dbReference type="ChEBI" id="CHEBI:15378"/>
        <dbReference type="ChEBI" id="CHEBI:29985"/>
        <dbReference type="ChEBI" id="CHEBI:30616"/>
        <dbReference type="ChEBI" id="CHEBI:43474"/>
        <dbReference type="ChEBI" id="CHEBI:58359"/>
        <dbReference type="ChEBI" id="CHEBI:78515"/>
        <dbReference type="ChEBI" id="CHEBI:78516"/>
        <dbReference type="ChEBI" id="CHEBI:456216"/>
    </reaction>
</comment>
<comment type="subunit">
    <text evidence="1">Heterotrimer of A, B and C subunits.</text>
</comment>
<comment type="similarity">
    <text evidence="1">Belongs to the GatB/GatE family. GatB subfamily.</text>
</comment>
<sequence>MTATSAAELLDYDDVVARFEPVMGMEVHVELSTATKMFCGCANAFGAEPNTQVCPVCLGLPGSLPVLNQQAVESAIRIGLALNCEIVPWCRFARKNYFYPDQPKNYQISQYDEPIAINGYLDVPLDDGSTWRVEIERAHMEEDTGKLTHLGSDTGRIAGATNSLADYNRAGVPLIEIVTRPIEGAGVKAPEIARAYVTALRDLLRALGVSDVRMDQGSMRCDANLSLKPIGQAEFGTRTETKNVNSLKSVEVAVRYEMRRQAAVLTSGGQVHQETRHFHEDGYTSPGRSKETAEDYRYFPEPDLEPVAPDAEFVEHLRQSLPELPWLRRNRIQQEWGISDEVMRDLVNNGAIDLVAATVEQGASSEAARAWWGNFLVQKANESGVELDALPITPAQVAAVVKLVDDGKLSNKLARQVVEGVLAGEGEPAQVMADRGLEVVRDDSALQAAVDEALAANPGIVEKIRGGKVQAAGAIVGAVMKATKGQADAARVRELVLAACS</sequence>
<protein>
    <recommendedName>
        <fullName evidence="1">Aspartyl/glutamyl-tRNA(Asn/Gln) amidotransferase subunit B</fullName>
        <shortName evidence="1">Asp/Glu-ADT subunit B</shortName>
        <ecNumber evidence="1">6.3.5.-</ecNumber>
    </recommendedName>
</protein>
<proteinExistence type="inferred from homology"/>
<accession>Q1BAT1</accession>